<keyword id="KW-0963">Cytoplasm</keyword>
<keyword id="KW-0479">Metal-binding</keyword>
<keyword id="KW-0862">Zinc</keyword>
<reference key="1">
    <citation type="submission" date="2009-04" db="EMBL/GenBank/DDBJ databases">
        <title>Genome sequence of Bacillus anthracis A0248.</title>
        <authorList>
            <person name="Dodson R.J."/>
            <person name="Munk A.C."/>
            <person name="Bruce D."/>
            <person name="Detter C."/>
            <person name="Tapia R."/>
            <person name="Sutton G."/>
            <person name="Sims D."/>
            <person name="Brettin T."/>
        </authorList>
    </citation>
    <scope>NUCLEOTIDE SEQUENCE [LARGE SCALE GENOMIC DNA]</scope>
    <source>
        <strain>A0248</strain>
    </source>
</reference>
<accession>C3PAU2</accession>
<feature type="chain" id="PRO_1000148318" description="Protein SprT-like">
    <location>
        <begin position="1"/>
        <end position="152"/>
    </location>
</feature>
<feature type="domain" description="SprT-like" evidence="1">
    <location>
        <begin position="7"/>
        <end position="148"/>
    </location>
</feature>
<feature type="active site" evidence="1">
    <location>
        <position position="68"/>
    </location>
</feature>
<feature type="binding site" evidence="1">
    <location>
        <position position="67"/>
    </location>
    <ligand>
        <name>Zn(2+)</name>
        <dbReference type="ChEBI" id="CHEBI:29105"/>
    </ligand>
</feature>
<feature type="binding site" evidence="1">
    <location>
        <position position="71"/>
    </location>
    <ligand>
        <name>Zn(2+)</name>
        <dbReference type="ChEBI" id="CHEBI:29105"/>
    </ligand>
</feature>
<dbReference type="EMBL" id="CP001598">
    <property type="protein sequence ID" value="ACQ50284.1"/>
    <property type="molecule type" value="Genomic_DNA"/>
</dbReference>
<dbReference type="RefSeq" id="WP_000344248.1">
    <property type="nucleotide sequence ID" value="NC_012659.1"/>
</dbReference>
<dbReference type="GeneID" id="45020295"/>
<dbReference type="KEGG" id="bai:BAA_0283"/>
<dbReference type="HOGENOM" id="CLU_123820_0_0_9"/>
<dbReference type="GO" id="GO:0005737">
    <property type="term" value="C:cytoplasm"/>
    <property type="evidence" value="ECO:0007669"/>
    <property type="project" value="UniProtKB-SubCell"/>
</dbReference>
<dbReference type="GO" id="GO:0008270">
    <property type="term" value="F:zinc ion binding"/>
    <property type="evidence" value="ECO:0007669"/>
    <property type="project" value="UniProtKB-UniRule"/>
</dbReference>
<dbReference type="GO" id="GO:0006950">
    <property type="term" value="P:response to stress"/>
    <property type="evidence" value="ECO:0007669"/>
    <property type="project" value="UniProtKB-ARBA"/>
</dbReference>
<dbReference type="HAMAP" id="MF_00745">
    <property type="entry name" value="SprT_like"/>
    <property type="match status" value="1"/>
</dbReference>
<dbReference type="InterPro" id="IPR006640">
    <property type="entry name" value="SprT-like_domain"/>
</dbReference>
<dbReference type="InterPro" id="IPR035240">
    <property type="entry name" value="SprT_Zn_ribbon"/>
</dbReference>
<dbReference type="InterPro" id="IPR023524">
    <property type="entry name" value="Uncharacterised_SprT-like"/>
</dbReference>
<dbReference type="NCBIfam" id="NF003339">
    <property type="entry name" value="PRK04351.1"/>
    <property type="match status" value="1"/>
</dbReference>
<dbReference type="Pfam" id="PF10263">
    <property type="entry name" value="SprT-like"/>
    <property type="match status" value="1"/>
</dbReference>
<dbReference type="Pfam" id="PF17283">
    <property type="entry name" value="Zn_ribbon_SprT"/>
    <property type="match status" value="1"/>
</dbReference>
<dbReference type="SMART" id="SM00731">
    <property type="entry name" value="SprT"/>
    <property type="match status" value="1"/>
</dbReference>
<name>SPRTL_BACAA</name>
<evidence type="ECO:0000255" key="1">
    <source>
        <dbReference type="HAMAP-Rule" id="MF_00745"/>
    </source>
</evidence>
<comment type="cofactor">
    <cofactor evidence="1">
        <name>Zn(2+)</name>
        <dbReference type="ChEBI" id="CHEBI:29105"/>
    </cofactor>
    <text evidence="1">Binds 1 zinc ion.</text>
</comment>
<comment type="subcellular location">
    <subcellularLocation>
        <location evidence="1">Cytoplasm</location>
    </subcellularLocation>
</comment>
<comment type="similarity">
    <text evidence="1">Belongs to the SprT family.</text>
</comment>
<organism>
    <name type="scientific">Bacillus anthracis (strain A0248)</name>
    <dbReference type="NCBI Taxonomy" id="592021"/>
    <lineage>
        <taxon>Bacteria</taxon>
        <taxon>Bacillati</taxon>
        <taxon>Bacillota</taxon>
        <taxon>Bacilli</taxon>
        <taxon>Bacillales</taxon>
        <taxon>Bacillaceae</taxon>
        <taxon>Bacillus</taxon>
        <taxon>Bacillus cereus group</taxon>
    </lineage>
</organism>
<proteinExistence type="inferred from homology"/>
<gene>
    <name type="ordered locus">BAA_0283</name>
</gene>
<sequence length="152" mass="18391">MDEQEIQRLVEEVSLQYFGMPFLHKAMFNSRLRTTGGRYLLNTHNIELNYRYYEMYGKEELVGIVKHELCHYHLHITGRGYKHRDKDFRELLKAVDAPRFCKRMVNAEKEKRVYVYECMECLLQYVRRRQINTKRYVCGKCKGKLNLIKKTS</sequence>
<protein>
    <recommendedName>
        <fullName evidence="1">Protein SprT-like</fullName>
    </recommendedName>
</protein>